<name>CNIH4_MOUSE</name>
<protein>
    <recommendedName>
        <fullName>Protein cornichon homolog 4</fullName>
        <shortName>CNIH-4</shortName>
    </recommendedName>
    <alternativeName>
        <fullName>Cornichon family AMPA receptor auxiliary protein 4</fullName>
    </alternativeName>
</protein>
<sequence length="139" mass="16089">MEAVVFLFSLLDCCALIFLSVYFIITLSDLECDYINARSCCSKLNKWVIPELVGHTIVTVLMLVSLHWFIFLLNLPVATWNIYRFIMVPSGNMGVFDPTEIHNRGQLKSHMKEAMIKLGFYLLCFFMYLYSMILALIND</sequence>
<keyword id="KW-0256">Endoplasmic reticulum</keyword>
<keyword id="KW-0931">ER-Golgi transport</keyword>
<keyword id="KW-0472">Membrane</keyword>
<keyword id="KW-0653">Protein transport</keyword>
<keyword id="KW-1185">Reference proteome</keyword>
<keyword id="KW-0812">Transmembrane</keyword>
<keyword id="KW-1133">Transmembrane helix</keyword>
<keyword id="KW-0813">Transport</keyword>
<feature type="chain" id="PRO_0000122231" description="Protein cornichon homolog 4">
    <location>
        <begin position="1"/>
        <end position="139"/>
    </location>
</feature>
<feature type="transmembrane region" description="Helical" evidence="2">
    <location>
        <begin position="5"/>
        <end position="25"/>
    </location>
</feature>
<feature type="transmembrane region" description="Helical" evidence="2">
    <location>
        <begin position="57"/>
        <end position="77"/>
    </location>
</feature>
<feature type="transmembrane region" description="Helical" evidence="2">
    <location>
        <begin position="118"/>
        <end position="138"/>
    </location>
</feature>
<evidence type="ECO:0000250" key="1">
    <source>
        <dbReference type="UniProtKB" id="Q9P003"/>
    </source>
</evidence>
<evidence type="ECO:0000255" key="2"/>
<evidence type="ECO:0000305" key="3"/>
<reference key="1">
    <citation type="journal article" date="2005" name="Science">
        <title>The transcriptional landscape of the mammalian genome.</title>
        <authorList>
            <person name="Carninci P."/>
            <person name="Kasukawa T."/>
            <person name="Katayama S."/>
            <person name="Gough J."/>
            <person name="Frith M.C."/>
            <person name="Maeda N."/>
            <person name="Oyama R."/>
            <person name="Ravasi T."/>
            <person name="Lenhard B."/>
            <person name="Wells C."/>
            <person name="Kodzius R."/>
            <person name="Shimokawa K."/>
            <person name="Bajic V.B."/>
            <person name="Brenner S.E."/>
            <person name="Batalov S."/>
            <person name="Forrest A.R."/>
            <person name="Zavolan M."/>
            <person name="Davis M.J."/>
            <person name="Wilming L.G."/>
            <person name="Aidinis V."/>
            <person name="Allen J.E."/>
            <person name="Ambesi-Impiombato A."/>
            <person name="Apweiler R."/>
            <person name="Aturaliya R.N."/>
            <person name="Bailey T.L."/>
            <person name="Bansal M."/>
            <person name="Baxter L."/>
            <person name="Beisel K.W."/>
            <person name="Bersano T."/>
            <person name="Bono H."/>
            <person name="Chalk A.M."/>
            <person name="Chiu K.P."/>
            <person name="Choudhary V."/>
            <person name="Christoffels A."/>
            <person name="Clutterbuck D.R."/>
            <person name="Crowe M.L."/>
            <person name="Dalla E."/>
            <person name="Dalrymple B.P."/>
            <person name="de Bono B."/>
            <person name="Della Gatta G."/>
            <person name="di Bernardo D."/>
            <person name="Down T."/>
            <person name="Engstrom P."/>
            <person name="Fagiolini M."/>
            <person name="Faulkner G."/>
            <person name="Fletcher C.F."/>
            <person name="Fukushima T."/>
            <person name="Furuno M."/>
            <person name="Futaki S."/>
            <person name="Gariboldi M."/>
            <person name="Georgii-Hemming P."/>
            <person name="Gingeras T.R."/>
            <person name="Gojobori T."/>
            <person name="Green R.E."/>
            <person name="Gustincich S."/>
            <person name="Harbers M."/>
            <person name="Hayashi Y."/>
            <person name="Hensch T.K."/>
            <person name="Hirokawa N."/>
            <person name="Hill D."/>
            <person name="Huminiecki L."/>
            <person name="Iacono M."/>
            <person name="Ikeo K."/>
            <person name="Iwama A."/>
            <person name="Ishikawa T."/>
            <person name="Jakt M."/>
            <person name="Kanapin A."/>
            <person name="Katoh M."/>
            <person name="Kawasawa Y."/>
            <person name="Kelso J."/>
            <person name="Kitamura H."/>
            <person name="Kitano H."/>
            <person name="Kollias G."/>
            <person name="Krishnan S.P."/>
            <person name="Kruger A."/>
            <person name="Kummerfeld S.K."/>
            <person name="Kurochkin I.V."/>
            <person name="Lareau L.F."/>
            <person name="Lazarevic D."/>
            <person name="Lipovich L."/>
            <person name="Liu J."/>
            <person name="Liuni S."/>
            <person name="McWilliam S."/>
            <person name="Madan Babu M."/>
            <person name="Madera M."/>
            <person name="Marchionni L."/>
            <person name="Matsuda H."/>
            <person name="Matsuzawa S."/>
            <person name="Miki H."/>
            <person name="Mignone F."/>
            <person name="Miyake S."/>
            <person name="Morris K."/>
            <person name="Mottagui-Tabar S."/>
            <person name="Mulder N."/>
            <person name="Nakano N."/>
            <person name="Nakauchi H."/>
            <person name="Ng P."/>
            <person name="Nilsson R."/>
            <person name="Nishiguchi S."/>
            <person name="Nishikawa S."/>
            <person name="Nori F."/>
            <person name="Ohara O."/>
            <person name="Okazaki Y."/>
            <person name="Orlando V."/>
            <person name="Pang K.C."/>
            <person name="Pavan W.J."/>
            <person name="Pavesi G."/>
            <person name="Pesole G."/>
            <person name="Petrovsky N."/>
            <person name="Piazza S."/>
            <person name="Reed J."/>
            <person name="Reid J.F."/>
            <person name="Ring B.Z."/>
            <person name="Ringwald M."/>
            <person name="Rost B."/>
            <person name="Ruan Y."/>
            <person name="Salzberg S.L."/>
            <person name="Sandelin A."/>
            <person name="Schneider C."/>
            <person name="Schoenbach C."/>
            <person name="Sekiguchi K."/>
            <person name="Semple C.A."/>
            <person name="Seno S."/>
            <person name="Sessa L."/>
            <person name="Sheng Y."/>
            <person name="Shibata Y."/>
            <person name="Shimada H."/>
            <person name="Shimada K."/>
            <person name="Silva D."/>
            <person name="Sinclair B."/>
            <person name="Sperling S."/>
            <person name="Stupka E."/>
            <person name="Sugiura K."/>
            <person name="Sultana R."/>
            <person name="Takenaka Y."/>
            <person name="Taki K."/>
            <person name="Tammoja K."/>
            <person name="Tan S.L."/>
            <person name="Tang S."/>
            <person name="Taylor M.S."/>
            <person name="Tegner J."/>
            <person name="Teichmann S.A."/>
            <person name="Ueda H.R."/>
            <person name="van Nimwegen E."/>
            <person name="Verardo R."/>
            <person name="Wei C.L."/>
            <person name="Yagi K."/>
            <person name="Yamanishi H."/>
            <person name="Zabarovsky E."/>
            <person name="Zhu S."/>
            <person name="Zimmer A."/>
            <person name="Hide W."/>
            <person name="Bult C."/>
            <person name="Grimmond S.M."/>
            <person name="Teasdale R.D."/>
            <person name="Liu E.T."/>
            <person name="Brusic V."/>
            <person name="Quackenbush J."/>
            <person name="Wahlestedt C."/>
            <person name="Mattick J.S."/>
            <person name="Hume D.A."/>
            <person name="Kai C."/>
            <person name="Sasaki D."/>
            <person name="Tomaru Y."/>
            <person name="Fukuda S."/>
            <person name="Kanamori-Katayama M."/>
            <person name="Suzuki M."/>
            <person name="Aoki J."/>
            <person name="Arakawa T."/>
            <person name="Iida J."/>
            <person name="Imamura K."/>
            <person name="Itoh M."/>
            <person name="Kato T."/>
            <person name="Kawaji H."/>
            <person name="Kawagashira N."/>
            <person name="Kawashima T."/>
            <person name="Kojima M."/>
            <person name="Kondo S."/>
            <person name="Konno H."/>
            <person name="Nakano K."/>
            <person name="Ninomiya N."/>
            <person name="Nishio T."/>
            <person name="Okada M."/>
            <person name="Plessy C."/>
            <person name="Shibata K."/>
            <person name="Shiraki T."/>
            <person name="Suzuki S."/>
            <person name="Tagami M."/>
            <person name="Waki K."/>
            <person name="Watahiki A."/>
            <person name="Okamura-Oho Y."/>
            <person name="Suzuki H."/>
            <person name="Kawai J."/>
            <person name="Hayashizaki Y."/>
        </authorList>
    </citation>
    <scope>NUCLEOTIDE SEQUENCE [LARGE SCALE MRNA]</scope>
    <source>
        <strain>BALB/cJ</strain>
        <strain>C57BL/6J</strain>
        <tissue>Lung</tissue>
        <tissue>Stomach</tissue>
    </source>
</reference>
<dbReference type="EMBL" id="AK021301">
    <property type="protein sequence ID" value="BAB32366.1"/>
    <property type="molecule type" value="mRNA"/>
</dbReference>
<dbReference type="EMBL" id="AK144157">
    <property type="protein sequence ID" value="BAE25737.1"/>
    <property type="molecule type" value="mRNA"/>
</dbReference>
<dbReference type="EMBL" id="AK165179">
    <property type="protein sequence ID" value="BAE38062.1"/>
    <property type="molecule type" value="mRNA"/>
</dbReference>
<dbReference type="EMBL" id="AK166153">
    <property type="protein sequence ID" value="BAE38600.1"/>
    <property type="molecule type" value="mRNA"/>
</dbReference>
<dbReference type="EMBL" id="BC065395">
    <property type="protein sequence ID" value="AAH65395.1"/>
    <property type="molecule type" value="mRNA"/>
</dbReference>
<dbReference type="CCDS" id="CCDS15582.1"/>
<dbReference type="RefSeq" id="NP_084407.1">
    <property type="nucleotide sequence ID" value="NM_030131.3"/>
</dbReference>
<dbReference type="SMR" id="Q9CX13"/>
<dbReference type="BioGRID" id="221056">
    <property type="interactions" value="3"/>
</dbReference>
<dbReference type="FunCoup" id="Q9CX13">
    <property type="interactions" value="2237"/>
</dbReference>
<dbReference type="IntAct" id="Q9CX13">
    <property type="interactions" value="1"/>
</dbReference>
<dbReference type="STRING" id="10090.ENSMUSP00000115772"/>
<dbReference type="SwissPalm" id="Q9CX13"/>
<dbReference type="PaxDb" id="10090-ENSMUSP00000115772"/>
<dbReference type="PeptideAtlas" id="Q9CX13"/>
<dbReference type="ProteomicsDB" id="283403"/>
<dbReference type="Pumba" id="Q9CX13"/>
<dbReference type="Antibodypedia" id="34638">
    <property type="antibodies" value="74 antibodies from 16 providers"/>
</dbReference>
<dbReference type="DNASU" id="98417"/>
<dbReference type="Ensembl" id="ENSMUST00000134115.8">
    <property type="protein sequence ID" value="ENSMUSP00000115772.2"/>
    <property type="gene ID" value="ENSMUSG00000062169.14"/>
</dbReference>
<dbReference type="GeneID" id="98417"/>
<dbReference type="KEGG" id="mmu:98417"/>
<dbReference type="UCSC" id="uc007dxe.2">
    <property type="organism name" value="mouse"/>
</dbReference>
<dbReference type="AGR" id="MGI:1925828"/>
<dbReference type="CTD" id="29097"/>
<dbReference type="MGI" id="MGI:1925828">
    <property type="gene designation" value="Cnih4"/>
</dbReference>
<dbReference type="VEuPathDB" id="HostDB:ENSMUSG00000062169"/>
<dbReference type="eggNOG" id="KOG2729">
    <property type="taxonomic scope" value="Eukaryota"/>
</dbReference>
<dbReference type="GeneTree" id="ENSGT00950000182834"/>
<dbReference type="InParanoid" id="Q9CX13"/>
<dbReference type="OMA" id="HKKECFI"/>
<dbReference type="OrthoDB" id="8775810at2759"/>
<dbReference type="PhylomeDB" id="Q9CX13"/>
<dbReference type="TreeFam" id="TF300083"/>
<dbReference type="BioGRID-ORCS" id="98417">
    <property type="hits" value="5 hits in 77 CRISPR screens"/>
</dbReference>
<dbReference type="ChiTaRS" id="Cnih4">
    <property type="organism name" value="mouse"/>
</dbReference>
<dbReference type="PRO" id="PR:Q9CX13"/>
<dbReference type="Proteomes" id="UP000000589">
    <property type="component" value="Chromosome 1"/>
</dbReference>
<dbReference type="RNAct" id="Q9CX13">
    <property type="molecule type" value="protein"/>
</dbReference>
<dbReference type="Bgee" id="ENSMUSG00000062169">
    <property type="expression patterns" value="Expressed in small intestine Peyer's patch and 252 other cell types or tissues"/>
</dbReference>
<dbReference type="ExpressionAtlas" id="Q9CX13">
    <property type="expression patterns" value="baseline and differential"/>
</dbReference>
<dbReference type="GO" id="GO:0005783">
    <property type="term" value="C:endoplasmic reticulum"/>
    <property type="evidence" value="ECO:0000250"/>
    <property type="project" value="UniProtKB"/>
</dbReference>
<dbReference type="GO" id="GO:0005793">
    <property type="term" value="C:endoplasmic reticulum-Golgi intermediate compartment"/>
    <property type="evidence" value="ECO:0000250"/>
    <property type="project" value="UniProtKB"/>
</dbReference>
<dbReference type="GO" id="GO:0016020">
    <property type="term" value="C:membrane"/>
    <property type="evidence" value="ECO:0007669"/>
    <property type="project" value="UniProtKB-SubCell"/>
</dbReference>
<dbReference type="GO" id="GO:0031730">
    <property type="term" value="F:CCR5 chemokine receptor binding"/>
    <property type="evidence" value="ECO:0007669"/>
    <property type="project" value="Ensembl"/>
</dbReference>
<dbReference type="GO" id="GO:0006888">
    <property type="term" value="P:endoplasmic reticulum to Golgi vesicle-mediated transport"/>
    <property type="evidence" value="ECO:0000250"/>
    <property type="project" value="UniProtKB"/>
</dbReference>
<dbReference type="GO" id="GO:0015031">
    <property type="term" value="P:protein transport"/>
    <property type="evidence" value="ECO:0007669"/>
    <property type="project" value="UniProtKB-KW"/>
</dbReference>
<dbReference type="InterPro" id="IPR003377">
    <property type="entry name" value="Cornichon"/>
</dbReference>
<dbReference type="PANTHER" id="PTHR12290">
    <property type="entry name" value="CORNICHON-RELATED"/>
    <property type="match status" value="1"/>
</dbReference>
<dbReference type="Pfam" id="PF03311">
    <property type="entry name" value="Cornichon"/>
    <property type="match status" value="1"/>
</dbReference>
<dbReference type="SMART" id="SM01398">
    <property type="entry name" value="Cornichon"/>
    <property type="match status" value="1"/>
</dbReference>
<gene>
    <name type="primary">Cnih4</name>
</gene>
<comment type="function">
    <text evidence="1">Involved in G protein-coupled receptors (GPCRs) trafficking from the endoplasmic reticulum to the cell surface; it promotes the exit of GPCRs from the early secretory pathway, likely through interaction with the COPII machinery.</text>
</comment>
<comment type="subunit">
    <text evidence="1">Interacts with Sec23/24 complex components SEC24B and SEC24D (By similarity). Interacts with CCR5 (By similarity). Interacts with ADRB2 in the early secretory pathway (By similarity).</text>
</comment>
<comment type="subcellular location">
    <subcellularLocation>
        <location evidence="3">Membrane</location>
        <topology evidence="3">Multi-pass membrane protein</topology>
    </subcellularLocation>
    <subcellularLocation>
        <location evidence="1">Endoplasmic reticulum</location>
    </subcellularLocation>
    <subcellularLocation>
        <location evidence="1">Endoplasmic reticulum-Golgi intermediate compartment</location>
    </subcellularLocation>
</comment>
<comment type="similarity">
    <text evidence="3">Belongs to the cornichon family.</text>
</comment>
<organism>
    <name type="scientific">Mus musculus</name>
    <name type="common">Mouse</name>
    <dbReference type="NCBI Taxonomy" id="10090"/>
    <lineage>
        <taxon>Eukaryota</taxon>
        <taxon>Metazoa</taxon>
        <taxon>Chordata</taxon>
        <taxon>Craniata</taxon>
        <taxon>Vertebrata</taxon>
        <taxon>Euteleostomi</taxon>
        <taxon>Mammalia</taxon>
        <taxon>Eutheria</taxon>
        <taxon>Euarchontoglires</taxon>
        <taxon>Glires</taxon>
        <taxon>Rodentia</taxon>
        <taxon>Myomorpha</taxon>
        <taxon>Muroidea</taxon>
        <taxon>Muridae</taxon>
        <taxon>Murinae</taxon>
        <taxon>Mus</taxon>
        <taxon>Mus</taxon>
    </lineage>
</organism>
<accession>Q9CX13</accession>
<accession>Q3TNM6</accession>
<proteinExistence type="evidence at transcript level"/>